<comment type="similarity">
    <text evidence="2">Belongs to the TUB family.</text>
</comment>
<comment type="sequence caution" evidence="2">
    <conflict type="erroneous gene model prediction">
        <sequence resource="EMBL-CDS" id="BAD28008"/>
    </conflict>
</comment>
<protein>
    <recommendedName>
        <fullName>Tubby-like protein 4</fullName>
        <shortName>OsTLP4</shortName>
    </recommendedName>
    <alternativeName>
        <fullName>Tubby-like F-box protein 13</fullName>
        <shortName>OsTLP13</shortName>
    </alternativeName>
</protein>
<keyword id="KW-1185">Reference proteome</keyword>
<feature type="chain" id="PRO_0000351123" description="Tubby-like protein 4">
    <location>
        <begin position="1"/>
        <end position="419"/>
    </location>
</feature>
<feature type="region of interest" description="Disordered" evidence="1">
    <location>
        <begin position="1"/>
        <end position="96"/>
    </location>
</feature>
<feature type="compositionally biased region" description="Basic and acidic residues" evidence="1">
    <location>
        <begin position="33"/>
        <end position="57"/>
    </location>
</feature>
<name>TLP4_ORYSJ</name>
<proteinExistence type="inferred from homology"/>
<organism>
    <name type="scientific">Oryza sativa subsp. japonica</name>
    <name type="common">Rice</name>
    <dbReference type="NCBI Taxonomy" id="39947"/>
    <lineage>
        <taxon>Eukaryota</taxon>
        <taxon>Viridiplantae</taxon>
        <taxon>Streptophyta</taxon>
        <taxon>Embryophyta</taxon>
        <taxon>Tracheophyta</taxon>
        <taxon>Spermatophyta</taxon>
        <taxon>Magnoliopsida</taxon>
        <taxon>Liliopsida</taxon>
        <taxon>Poales</taxon>
        <taxon>Poaceae</taxon>
        <taxon>BOP clade</taxon>
        <taxon>Oryzoideae</taxon>
        <taxon>Oryzeae</taxon>
        <taxon>Oryzinae</taxon>
        <taxon>Oryza</taxon>
        <taxon>Oryza sativa</taxon>
    </lineage>
</organism>
<sequence>MAATKREPLRPISSNAGTVERRARGGAAAAAAAKEKEKENEVPTEIGRGKDGGEKKPPVVVAVVVPPAPPLKPSSLQVRMKAEEEKEREEEEEGSSPAVALVAGLQVRMGPRGRELLLPPPPPPPPLPLPTSSSYEAWDLSDNEAAPASSWATLPNRALLCRPLPLDVGRCTCIIAKETLAAAAAGARGVALYSLYTNEGQGRQDRKLAVARHRRRRGRSEFVVAQNLDGIFCTSDKNFLGTLSSNLVGSRYRIWGQGNRVDEIKSQSKRLLGVVAFAPTVTTLTGSFRSMRAWIPKNQSIHLKNSNSAQIQHISGLPKDWQEKKIKADQLCSRSPFYNNMTKRYELDFRERAGRMGYKVQPSVKNFQMTLEEKGRQTILQLGRIGKSKYIMDFRYPLTGYQALCICLASIDSKLCCTL</sequence>
<reference key="1">
    <citation type="journal article" date="2005" name="Nature">
        <title>The map-based sequence of the rice genome.</title>
        <authorList>
            <consortium name="International rice genome sequencing project (IRGSP)"/>
        </authorList>
    </citation>
    <scope>NUCLEOTIDE SEQUENCE [LARGE SCALE GENOMIC DNA]</scope>
    <source>
        <strain>cv. Nipponbare</strain>
    </source>
</reference>
<reference key="2">
    <citation type="journal article" date="2013" name="Rice">
        <title>Improvement of the Oryza sativa Nipponbare reference genome using next generation sequence and optical map data.</title>
        <authorList>
            <person name="Kawahara Y."/>
            <person name="de la Bastide M."/>
            <person name="Hamilton J.P."/>
            <person name="Kanamori H."/>
            <person name="McCombie W.R."/>
            <person name="Ouyang S."/>
            <person name="Schwartz D.C."/>
            <person name="Tanaka T."/>
            <person name="Wu J."/>
            <person name="Zhou S."/>
            <person name="Childs K.L."/>
            <person name="Davidson R.M."/>
            <person name="Lin H."/>
            <person name="Quesada-Ocampo L."/>
            <person name="Vaillancourt B."/>
            <person name="Sakai H."/>
            <person name="Lee S.S."/>
            <person name="Kim J."/>
            <person name="Numa H."/>
            <person name="Itoh T."/>
            <person name="Buell C.R."/>
            <person name="Matsumoto T."/>
        </authorList>
    </citation>
    <scope>GENOME REANNOTATION</scope>
    <source>
        <strain>cv. Nipponbare</strain>
    </source>
</reference>
<reference key="3">
    <citation type="journal article" date="2008" name="FEBS J.">
        <title>Identification of rice TUBBY-like genes and their evolution.</title>
        <authorList>
            <person name="Liu Q."/>
        </authorList>
    </citation>
    <scope>GENE FAMILY</scope>
    <scope>NOMENCLATURE</scope>
</reference>
<reference key="4">
    <citation type="journal article" date="2008" name="Genomics">
        <title>Genomewide comparative phylogenetic and molecular evolutionary analysis of tubby-like protein family in Arabidopsis, rice, and poplar.</title>
        <authorList>
            <person name="Yang Z."/>
            <person name="Zhou Y."/>
            <person name="Wang X."/>
            <person name="Gu S."/>
            <person name="Yu J."/>
            <person name="Liang G."/>
            <person name="Yan C."/>
            <person name="Xu C."/>
        </authorList>
    </citation>
    <scope>GENE FAMILY</scope>
    <scope>NOMENCLATURE</scope>
</reference>
<accession>Q6ETL2</accession>
<dbReference type="EMBL" id="AP004840">
    <property type="protein sequence ID" value="BAD28008.1"/>
    <property type="status" value="ALT_SEQ"/>
    <property type="molecule type" value="Genomic_DNA"/>
</dbReference>
<dbReference type="EMBL" id="AP014958">
    <property type="status" value="NOT_ANNOTATED_CDS"/>
    <property type="molecule type" value="Genomic_DNA"/>
</dbReference>
<dbReference type="SMR" id="Q6ETL2"/>
<dbReference type="FunCoup" id="Q6ETL2">
    <property type="interactions" value="1077"/>
</dbReference>
<dbReference type="STRING" id="39947.Q6ETL2"/>
<dbReference type="PaxDb" id="39947-Q6ETL2"/>
<dbReference type="GeneID" id="107276884"/>
<dbReference type="KEGG" id="osa:107276884"/>
<dbReference type="eggNOG" id="KOG2502">
    <property type="taxonomic scope" value="Eukaryota"/>
</dbReference>
<dbReference type="InParanoid" id="Q6ETL2"/>
<dbReference type="OrthoDB" id="8775810at2759"/>
<dbReference type="Proteomes" id="UP000000763">
    <property type="component" value="Chromosome 2"/>
</dbReference>
<dbReference type="Proteomes" id="UP000059680">
    <property type="component" value="Chromosome 2"/>
</dbReference>
<dbReference type="Gene3D" id="3.20.90.10">
    <property type="entry name" value="Tubby Protein, Chain A"/>
    <property type="match status" value="1"/>
</dbReference>
<dbReference type="InterPro" id="IPR025659">
    <property type="entry name" value="Tubby-like_C"/>
</dbReference>
<dbReference type="InterPro" id="IPR000007">
    <property type="entry name" value="Tubby_C"/>
</dbReference>
<dbReference type="PANTHER" id="PTHR16517:SF131">
    <property type="entry name" value="TUBBY-LIKE PROTEIN 8"/>
    <property type="match status" value="1"/>
</dbReference>
<dbReference type="PANTHER" id="PTHR16517">
    <property type="entry name" value="TUBBY-RELATED"/>
    <property type="match status" value="1"/>
</dbReference>
<dbReference type="Pfam" id="PF01167">
    <property type="entry name" value="Tub"/>
    <property type="match status" value="1"/>
</dbReference>
<dbReference type="PRINTS" id="PR01573">
    <property type="entry name" value="SUPERTUBBY"/>
</dbReference>
<dbReference type="SUPFAM" id="SSF54518">
    <property type="entry name" value="Tubby C-terminal domain-like"/>
    <property type="match status" value="1"/>
</dbReference>
<evidence type="ECO:0000256" key="1">
    <source>
        <dbReference type="SAM" id="MobiDB-lite"/>
    </source>
</evidence>
<evidence type="ECO:0000305" key="2"/>
<gene>
    <name type="primary">TULP4</name>
    <name type="synonym">TULP13</name>
    <name type="ordered locus">Os02g0179400</name>
    <name type="ordered locus">LOC_Os02g08310</name>
    <name type="ORF">P0544B02.22</name>
</gene>